<gene>
    <name evidence="1" type="primary">glpK</name>
    <name type="ordered locus">Ajs_0382</name>
</gene>
<accession>A1W309</accession>
<keyword id="KW-0067">ATP-binding</keyword>
<keyword id="KW-0319">Glycerol metabolism</keyword>
<keyword id="KW-0418">Kinase</keyword>
<keyword id="KW-0547">Nucleotide-binding</keyword>
<keyword id="KW-0808">Transferase</keyword>
<reference key="1">
    <citation type="submission" date="2006-12" db="EMBL/GenBank/DDBJ databases">
        <title>Complete sequence of chromosome 1 of Acidovorax sp. JS42.</title>
        <authorList>
            <person name="Copeland A."/>
            <person name="Lucas S."/>
            <person name="Lapidus A."/>
            <person name="Barry K."/>
            <person name="Detter J.C."/>
            <person name="Glavina del Rio T."/>
            <person name="Dalin E."/>
            <person name="Tice H."/>
            <person name="Pitluck S."/>
            <person name="Chertkov O."/>
            <person name="Brettin T."/>
            <person name="Bruce D."/>
            <person name="Han C."/>
            <person name="Tapia R."/>
            <person name="Gilna P."/>
            <person name="Schmutz J."/>
            <person name="Larimer F."/>
            <person name="Land M."/>
            <person name="Hauser L."/>
            <person name="Kyrpides N."/>
            <person name="Kim E."/>
            <person name="Stahl D."/>
            <person name="Richardson P."/>
        </authorList>
    </citation>
    <scope>NUCLEOTIDE SEQUENCE [LARGE SCALE GENOMIC DNA]</scope>
    <source>
        <strain>JS42</strain>
    </source>
</reference>
<protein>
    <recommendedName>
        <fullName evidence="1">Glycerol kinase</fullName>
        <ecNumber evidence="1">2.7.1.30</ecNumber>
    </recommendedName>
    <alternativeName>
        <fullName evidence="1">ATP:glycerol 3-phosphotransferase</fullName>
    </alternativeName>
    <alternativeName>
        <fullName evidence="1">Glycerokinase</fullName>
        <shortName evidence="1">GK</shortName>
    </alternativeName>
</protein>
<feature type="chain" id="PRO_1000098709" description="Glycerol kinase">
    <location>
        <begin position="1"/>
        <end position="498"/>
    </location>
</feature>
<feature type="binding site" evidence="1">
    <location>
        <position position="11"/>
    </location>
    <ligand>
        <name>ADP</name>
        <dbReference type="ChEBI" id="CHEBI:456216"/>
    </ligand>
</feature>
<feature type="binding site" evidence="1">
    <location>
        <position position="11"/>
    </location>
    <ligand>
        <name>ATP</name>
        <dbReference type="ChEBI" id="CHEBI:30616"/>
    </ligand>
</feature>
<feature type="binding site" evidence="1">
    <location>
        <position position="11"/>
    </location>
    <ligand>
        <name>sn-glycerol 3-phosphate</name>
        <dbReference type="ChEBI" id="CHEBI:57597"/>
    </ligand>
</feature>
<feature type="binding site" evidence="1">
    <location>
        <position position="12"/>
    </location>
    <ligand>
        <name>ATP</name>
        <dbReference type="ChEBI" id="CHEBI:30616"/>
    </ligand>
</feature>
<feature type="binding site" evidence="1">
    <location>
        <position position="13"/>
    </location>
    <ligand>
        <name>ATP</name>
        <dbReference type="ChEBI" id="CHEBI:30616"/>
    </ligand>
</feature>
<feature type="binding site" evidence="1">
    <location>
        <position position="15"/>
    </location>
    <ligand>
        <name>ADP</name>
        <dbReference type="ChEBI" id="CHEBI:456216"/>
    </ligand>
</feature>
<feature type="binding site" evidence="1">
    <location>
        <position position="81"/>
    </location>
    <ligand>
        <name>glycerol</name>
        <dbReference type="ChEBI" id="CHEBI:17754"/>
    </ligand>
</feature>
<feature type="binding site" evidence="1">
    <location>
        <position position="81"/>
    </location>
    <ligand>
        <name>sn-glycerol 3-phosphate</name>
        <dbReference type="ChEBI" id="CHEBI:57597"/>
    </ligand>
</feature>
<feature type="binding site" evidence="1">
    <location>
        <position position="82"/>
    </location>
    <ligand>
        <name>glycerol</name>
        <dbReference type="ChEBI" id="CHEBI:17754"/>
    </ligand>
</feature>
<feature type="binding site" evidence="1">
    <location>
        <position position="82"/>
    </location>
    <ligand>
        <name>sn-glycerol 3-phosphate</name>
        <dbReference type="ChEBI" id="CHEBI:57597"/>
    </ligand>
</feature>
<feature type="binding site" evidence="1">
    <location>
        <position position="133"/>
    </location>
    <ligand>
        <name>glycerol</name>
        <dbReference type="ChEBI" id="CHEBI:17754"/>
    </ligand>
</feature>
<feature type="binding site" evidence="1">
    <location>
        <position position="133"/>
    </location>
    <ligand>
        <name>sn-glycerol 3-phosphate</name>
        <dbReference type="ChEBI" id="CHEBI:57597"/>
    </ligand>
</feature>
<feature type="binding site" evidence="1">
    <location>
        <position position="242"/>
    </location>
    <ligand>
        <name>glycerol</name>
        <dbReference type="ChEBI" id="CHEBI:17754"/>
    </ligand>
</feature>
<feature type="binding site" evidence="1">
    <location>
        <position position="242"/>
    </location>
    <ligand>
        <name>sn-glycerol 3-phosphate</name>
        <dbReference type="ChEBI" id="CHEBI:57597"/>
    </ligand>
</feature>
<feature type="binding site" evidence="1">
    <location>
        <position position="243"/>
    </location>
    <ligand>
        <name>glycerol</name>
        <dbReference type="ChEBI" id="CHEBI:17754"/>
    </ligand>
</feature>
<feature type="binding site" evidence="1">
    <location>
        <position position="264"/>
    </location>
    <ligand>
        <name>ADP</name>
        <dbReference type="ChEBI" id="CHEBI:456216"/>
    </ligand>
</feature>
<feature type="binding site" evidence="1">
    <location>
        <position position="264"/>
    </location>
    <ligand>
        <name>ATP</name>
        <dbReference type="ChEBI" id="CHEBI:30616"/>
    </ligand>
</feature>
<feature type="binding site" evidence="1">
    <location>
        <position position="307"/>
    </location>
    <ligand>
        <name>ADP</name>
        <dbReference type="ChEBI" id="CHEBI:456216"/>
    </ligand>
</feature>
<feature type="binding site" evidence="1">
    <location>
        <position position="307"/>
    </location>
    <ligand>
        <name>ATP</name>
        <dbReference type="ChEBI" id="CHEBI:30616"/>
    </ligand>
</feature>
<feature type="binding site" evidence="1">
    <location>
        <position position="311"/>
    </location>
    <ligand>
        <name>ATP</name>
        <dbReference type="ChEBI" id="CHEBI:30616"/>
    </ligand>
</feature>
<feature type="binding site" evidence="1">
    <location>
        <position position="412"/>
    </location>
    <ligand>
        <name>ADP</name>
        <dbReference type="ChEBI" id="CHEBI:456216"/>
    </ligand>
</feature>
<feature type="binding site" evidence="1">
    <location>
        <position position="412"/>
    </location>
    <ligand>
        <name>ATP</name>
        <dbReference type="ChEBI" id="CHEBI:30616"/>
    </ligand>
</feature>
<feature type="binding site" evidence="1">
    <location>
        <position position="416"/>
    </location>
    <ligand>
        <name>ADP</name>
        <dbReference type="ChEBI" id="CHEBI:456216"/>
    </ligand>
</feature>
<evidence type="ECO:0000255" key="1">
    <source>
        <dbReference type="HAMAP-Rule" id="MF_00186"/>
    </source>
</evidence>
<name>GLPK_ACISJ</name>
<sequence length="498" mass="52817">MTYLLALDQGTSSSRSIVFDERGHIVAQAQLELPQIYPQPGWVEHDPLEIWRTQIATARDALAKAGIAANAVRAVGITNQRETTVLWNRKTGQPVHHAIVWQDRRAEPACAQLREQGHAATIQAKTGLLIDAYFSGTKLQWLLDHVPGARDAAEAGELAFGTVDSWLIWQLTGGKRHVTDVSNASRTMLFNVHTNQWDDELLQLLRIPRALMPEVLPSASDFGATDAALLGGPIAIGGVAGDQQSALFGQACFTAGMAKNTYGTGCFMLMHTGSRFQKSENGLLTTSAAQAGQSPEYAMEGSVFVGGAVVQWLRDGLRAISASSEVQALAESVPDSGGVMMVPAFTGLGAPYWKPDARGTITGLTRGTTIAHIARAALESIAYQSAALLAAMSRDAVAAGGAPVSELRVDGGACVNDLLMQFQADLLGIPVVRPAVVETTALGAAYLAGLASGVYASTDELSALWQAERRFTPTLPRSQAEALMARWEHAVAQAVLPG</sequence>
<comment type="function">
    <text evidence="1">Key enzyme in the regulation of glycerol uptake and metabolism. Catalyzes the phosphorylation of glycerol to yield sn-glycerol 3-phosphate.</text>
</comment>
<comment type="catalytic activity">
    <reaction evidence="1">
        <text>glycerol + ATP = sn-glycerol 3-phosphate + ADP + H(+)</text>
        <dbReference type="Rhea" id="RHEA:21644"/>
        <dbReference type="ChEBI" id="CHEBI:15378"/>
        <dbReference type="ChEBI" id="CHEBI:17754"/>
        <dbReference type="ChEBI" id="CHEBI:30616"/>
        <dbReference type="ChEBI" id="CHEBI:57597"/>
        <dbReference type="ChEBI" id="CHEBI:456216"/>
        <dbReference type="EC" id="2.7.1.30"/>
    </reaction>
</comment>
<comment type="activity regulation">
    <text evidence="1">Inhibited by fructose 1,6-bisphosphate (FBP).</text>
</comment>
<comment type="pathway">
    <text evidence="1">Polyol metabolism; glycerol degradation via glycerol kinase pathway; sn-glycerol 3-phosphate from glycerol: step 1/1.</text>
</comment>
<comment type="similarity">
    <text evidence="1">Belongs to the FGGY kinase family.</text>
</comment>
<dbReference type="EC" id="2.7.1.30" evidence="1"/>
<dbReference type="EMBL" id="CP000539">
    <property type="protein sequence ID" value="ABM40634.1"/>
    <property type="molecule type" value="Genomic_DNA"/>
</dbReference>
<dbReference type="SMR" id="A1W309"/>
<dbReference type="STRING" id="232721.Ajs_0382"/>
<dbReference type="KEGG" id="ajs:Ajs_0382"/>
<dbReference type="eggNOG" id="COG0554">
    <property type="taxonomic scope" value="Bacteria"/>
</dbReference>
<dbReference type="HOGENOM" id="CLU_009281_2_3_4"/>
<dbReference type="UniPathway" id="UPA00618">
    <property type="reaction ID" value="UER00672"/>
</dbReference>
<dbReference type="Proteomes" id="UP000000645">
    <property type="component" value="Chromosome"/>
</dbReference>
<dbReference type="GO" id="GO:0005829">
    <property type="term" value="C:cytosol"/>
    <property type="evidence" value="ECO:0007669"/>
    <property type="project" value="TreeGrafter"/>
</dbReference>
<dbReference type="GO" id="GO:0005524">
    <property type="term" value="F:ATP binding"/>
    <property type="evidence" value="ECO:0007669"/>
    <property type="project" value="UniProtKB-UniRule"/>
</dbReference>
<dbReference type="GO" id="GO:0004370">
    <property type="term" value="F:glycerol kinase activity"/>
    <property type="evidence" value="ECO:0000250"/>
    <property type="project" value="UniProtKB"/>
</dbReference>
<dbReference type="GO" id="GO:0019563">
    <property type="term" value="P:glycerol catabolic process"/>
    <property type="evidence" value="ECO:0007669"/>
    <property type="project" value="UniProtKB-UniRule"/>
</dbReference>
<dbReference type="GO" id="GO:0006071">
    <property type="term" value="P:glycerol metabolic process"/>
    <property type="evidence" value="ECO:0000250"/>
    <property type="project" value="UniProtKB"/>
</dbReference>
<dbReference type="GO" id="GO:0006072">
    <property type="term" value="P:glycerol-3-phosphate metabolic process"/>
    <property type="evidence" value="ECO:0007669"/>
    <property type="project" value="InterPro"/>
</dbReference>
<dbReference type="CDD" id="cd07786">
    <property type="entry name" value="FGGY_EcGK_like"/>
    <property type="match status" value="1"/>
</dbReference>
<dbReference type="FunFam" id="3.30.420.40:FF:000007">
    <property type="entry name" value="Glycerol kinase"/>
    <property type="match status" value="1"/>
</dbReference>
<dbReference type="FunFam" id="3.30.420.40:FF:000008">
    <property type="entry name" value="Glycerol kinase"/>
    <property type="match status" value="1"/>
</dbReference>
<dbReference type="Gene3D" id="3.30.420.40">
    <property type="match status" value="2"/>
</dbReference>
<dbReference type="HAMAP" id="MF_00186">
    <property type="entry name" value="Glycerol_kin"/>
    <property type="match status" value="1"/>
</dbReference>
<dbReference type="InterPro" id="IPR043129">
    <property type="entry name" value="ATPase_NBD"/>
</dbReference>
<dbReference type="InterPro" id="IPR000577">
    <property type="entry name" value="Carb_kinase_FGGY"/>
</dbReference>
<dbReference type="InterPro" id="IPR018483">
    <property type="entry name" value="Carb_kinase_FGGY_CS"/>
</dbReference>
<dbReference type="InterPro" id="IPR018485">
    <property type="entry name" value="FGGY_C"/>
</dbReference>
<dbReference type="InterPro" id="IPR018484">
    <property type="entry name" value="FGGY_N"/>
</dbReference>
<dbReference type="InterPro" id="IPR005999">
    <property type="entry name" value="Glycerol_kin"/>
</dbReference>
<dbReference type="NCBIfam" id="TIGR01311">
    <property type="entry name" value="glycerol_kin"/>
    <property type="match status" value="1"/>
</dbReference>
<dbReference type="NCBIfam" id="NF000756">
    <property type="entry name" value="PRK00047.1"/>
    <property type="match status" value="1"/>
</dbReference>
<dbReference type="PANTHER" id="PTHR10196:SF69">
    <property type="entry name" value="GLYCEROL KINASE"/>
    <property type="match status" value="1"/>
</dbReference>
<dbReference type="PANTHER" id="PTHR10196">
    <property type="entry name" value="SUGAR KINASE"/>
    <property type="match status" value="1"/>
</dbReference>
<dbReference type="Pfam" id="PF02782">
    <property type="entry name" value="FGGY_C"/>
    <property type="match status" value="1"/>
</dbReference>
<dbReference type="Pfam" id="PF00370">
    <property type="entry name" value="FGGY_N"/>
    <property type="match status" value="1"/>
</dbReference>
<dbReference type="PIRSF" id="PIRSF000538">
    <property type="entry name" value="GlpK"/>
    <property type="match status" value="1"/>
</dbReference>
<dbReference type="SUPFAM" id="SSF53067">
    <property type="entry name" value="Actin-like ATPase domain"/>
    <property type="match status" value="2"/>
</dbReference>
<dbReference type="PROSITE" id="PS00933">
    <property type="entry name" value="FGGY_KINASES_1"/>
    <property type="match status" value="1"/>
</dbReference>
<dbReference type="PROSITE" id="PS00445">
    <property type="entry name" value="FGGY_KINASES_2"/>
    <property type="match status" value="1"/>
</dbReference>
<proteinExistence type="inferred from homology"/>
<organism>
    <name type="scientific">Acidovorax sp. (strain JS42)</name>
    <dbReference type="NCBI Taxonomy" id="232721"/>
    <lineage>
        <taxon>Bacteria</taxon>
        <taxon>Pseudomonadati</taxon>
        <taxon>Pseudomonadota</taxon>
        <taxon>Betaproteobacteria</taxon>
        <taxon>Burkholderiales</taxon>
        <taxon>Comamonadaceae</taxon>
        <taxon>Acidovorax</taxon>
    </lineage>
</organism>